<protein>
    <recommendedName>
        <fullName>Ceramide synthase LAC1</fullName>
    </recommendedName>
    <alternativeName>
        <fullName>Very-long-chain ceramide synthase LAC1</fullName>
        <ecNumber evidence="7 11 14 15 17">2.3.1.297</ecNumber>
    </alternativeName>
</protein>
<feature type="initiator methionine" description="Removed" evidence="26">
    <location>
        <position position="1"/>
    </location>
</feature>
<feature type="chain" id="PRO_0000185535" description="Ceramide synthase LAC1">
    <location>
        <begin position="2"/>
        <end position="418"/>
    </location>
</feature>
<feature type="topological domain" description="Cytoplasmic" evidence="2 15">
    <location>
        <begin position="2"/>
        <end position="81"/>
    </location>
</feature>
<feature type="transmembrane region" description="Helical" evidence="14 15 17">
    <location>
        <begin position="82"/>
        <end position="102"/>
    </location>
</feature>
<feature type="topological domain" description="Lumenal" evidence="14 15 17">
    <location>
        <begin position="103"/>
        <end position="130"/>
    </location>
</feature>
<feature type="transmembrane region" description="Helical" evidence="14 15 17">
    <location>
        <begin position="131"/>
        <end position="155"/>
    </location>
</feature>
<feature type="topological domain" description="Cytoplasmic" evidence="14 15 17">
    <location>
        <begin position="156"/>
        <end position="172"/>
    </location>
</feature>
<feature type="transmembrane region" description="Helical" evidence="14 15 17">
    <location>
        <begin position="173"/>
        <end position="194"/>
    </location>
</feature>
<feature type="topological domain" description="Lumenal" evidence="14 15 17">
    <location>
        <begin position="195"/>
        <end position="217"/>
    </location>
</feature>
<feature type="transmembrane region" description="Helical" evidence="14 15 17">
    <location>
        <begin position="218"/>
        <end position="240"/>
    </location>
</feature>
<feature type="topological domain" description="Cytoplasmic" evidence="14 15 17">
    <location>
        <begin position="241"/>
        <end position="249"/>
    </location>
</feature>
<feature type="transmembrane region" description="Helical" evidence="14 15 17">
    <location>
        <begin position="250"/>
        <end position="268"/>
    </location>
</feature>
<feature type="topological domain" description="Lumenal" evidence="14 15 17">
    <location>
        <begin position="269"/>
        <end position="273"/>
    </location>
</feature>
<feature type="transmembrane region" description="Helical" evidence="14 15 17">
    <location>
        <begin position="274"/>
        <end position="295"/>
    </location>
</feature>
<feature type="topological domain" description="Cytoplasmic" evidence="14 15 17">
    <location>
        <begin position="296"/>
        <end position="305"/>
    </location>
</feature>
<feature type="transmembrane region" description="Helical" evidence="14 15 17">
    <location>
        <begin position="306"/>
        <end position="334"/>
    </location>
</feature>
<feature type="topological domain" description="Lumenal" evidence="14 15 17">
    <location>
        <begin position="335"/>
        <end position="353"/>
    </location>
</feature>
<feature type="transmembrane region" description="Helical" evidence="14 15 17">
    <location>
        <begin position="354"/>
        <end position="382"/>
    </location>
</feature>
<feature type="topological domain" description="Cytoplasmic" evidence="14 15 17">
    <location>
        <begin position="383"/>
        <end position="418"/>
    </location>
</feature>
<feature type="domain" description="TLC" evidence="3 15">
    <location>
        <begin position="168"/>
        <end position="385"/>
    </location>
</feature>
<feature type="region of interest" description="Disordered" evidence="4">
    <location>
        <begin position="1"/>
        <end position="25"/>
    </location>
</feature>
<feature type="region of interest" description="Disordered" evidence="4">
    <location>
        <begin position="390"/>
        <end position="418"/>
    </location>
</feature>
<feature type="compositionally biased region" description="Polar residues" evidence="4">
    <location>
        <begin position="1"/>
        <end position="14"/>
    </location>
</feature>
<feature type="compositionally biased region" description="Basic residues" evidence="4">
    <location>
        <begin position="15"/>
        <end position="24"/>
    </location>
</feature>
<feature type="binding site" evidence="17 22">
    <location>
        <position position="169"/>
    </location>
    <ligand>
        <name>fumonisin B1</name>
        <dbReference type="ChEBI" id="CHEBI:62554"/>
    </ligand>
</feature>
<feature type="binding site" evidence="15 17 22 23">
    <location>
        <position position="172"/>
    </location>
    <ligand>
        <name>fumonisin B1</name>
        <dbReference type="ChEBI" id="CHEBI:62554"/>
    </ligand>
</feature>
<feature type="binding site" evidence="15 23">
    <location>
        <position position="182"/>
    </location>
    <ligand>
        <name>fumonisin B1</name>
        <dbReference type="ChEBI" id="CHEBI:62554"/>
    </ligand>
</feature>
<feature type="binding site" evidence="15 23">
    <location>
        <position position="224"/>
    </location>
    <ligand>
        <name>hexacosanoate</name>
        <dbReference type="ChEBI" id="CHEBI:31013"/>
    </ligand>
</feature>
<feature type="binding site" evidence="15 23">
    <location>
        <position position="231"/>
    </location>
    <ligand>
        <name>fumonisin B1</name>
        <dbReference type="ChEBI" id="CHEBI:62554"/>
    </ligand>
</feature>
<feature type="binding site" evidence="15 17 21 23">
    <location>
        <position position="231"/>
    </location>
    <ligand>
        <name>hexacosanoate</name>
        <dbReference type="ChEBI" id="CHEBI:31013"/>
    </ligand>
</feature>
<feature type="binding site" evidence="14 19">
    <location>
        <position position="231"/>
    </location>
    <ligand>
        <name>hexacosanoyl-CoA</name>
        <dbReference type="ChEBI" id="CHEBI:64868"/>
    </ligand>
</feature>
<feature type="binding site" evidence="15 17 22 23">
    <location>
        <position position="255"/>
    </location>
    <ligand>
        <name>fumonisin B1</name>
        <dbReference type="ChEBI" id="CHEBI:62554"/>
    </ligand>
</feature>
<feature type="binding site" evidence="15 17 21 22 23">
    <location>
        <position position="255"/>
    </location>
    <ligand>
        <name>hexacosanoate</name>
        <dbReference type="ChEBI" id="CHEBI:31013"/>
    </ligand>
</feature>
<feature type="binding site" evidence="14 19">
    <location>
        <position position="255"/>
    </location>
    <ligand>
        <name>hexacosanoyl-CoA</name>
        <dbReference type="ChEBI" id="CHEBI:64868"/>
    </ligand>
</feature>
<feature type="binding site" evidence="17 21 22">
    <location>
        <position position="259"/>
    </location>
    <ligand>
        <name>hexacosanoate</name>
        <dbReference type="ChEBI" id="CHEBI:31013"/>
    </ligand>
</feature>
<feature type="binding site" evidence="14 19">
    <location>
        <position position="259"/>
    </location>
    <ligand>
        <name>hexacosanoyl-CoA</name>
        <dbReference type="ChEBI" id="CHEBI:64868"/>
    </ligand>
</feature>
<feature type="binding site" evidence="15 17 21 22 23">
    <location>
        <position position="262"/>
    </location>
    <ligand>
        <name>hexacosanoate</name>
        <dbReference type="ChEBI" id="CHEBI:31013"/>
    </ligand>
</feature>
<feature type="binding site" evidence="14 19">
    <location>
        <position position="262"/>
    </location>
    <ligand>
        <name>hexacosanoyl-CoA</name>
        <dbReference type="ChEBI" id="CHEBI:64868"/>
    </ligand>
</feature>
<feature type="binding site" evidence="17 21 22">
    <location>
        <position position="263"/>
    </location>
    <ligand>
        <name>hexacosanoate</name>
        <dbReference type="ChEBI" id="CHEBI:31013"/>
    </ligand>
</feature>
<feature type="binding site" evidence="15 17 21 22 23">
    <location>
        <position position="265"/>
    </location>
    <ligand>
        <name>hexacosanoate</name>
        <dbReference type="ChEBI" id="CHEBI:31013"/>
    </ligand>
</feature>
<feature type="binding site" evidence="14 19">
    <location>
        <position position="265"/>
    </location>
    <ligand>
        <name>hexacosanoyl-CoA</name>
        <dbReference type="ChEBI" id="CHEBI:64868"/>
    </ligand>
</feature>
<feature type="binding site" evidence="15 17 21 22 23">
    <location>
        <position position="266"/>
    </location>
    <ligand>
        <name>hexacosanoate</name>
        <dbReference type="ChEBI" id="CHEBI:31013"/>
    </ligand>
</feature>
<feature type="binding site" evidence="14 19">
    <location>
        <position position="266"/>
    </location>
    <ligand>
        <name>hexacosanoyl-CoA</name>
        <dbReference type="ChEBI" id="CHEBI:64868"/>
    </ligand>
</feature>
<feature type="binding site" evidence="15 17 21 22 23">
    <location>
        <position position="269"/>
    </location>
    <ligand>
        <name>hexacosanoate</name>
        <dbReference type="ChEBI" id="CHEBI:31013"/>
    </ligand>
</feature>
<feature type="binding site" evidence="15 17 21 23">
    <location>
        <position position="271"/>
    </location>
    <ligand>
        <name>hexacosanoate</name>
        <dbReference type="ChEBI" id="CHEBI:31013"/>
    </ligand>
</feature>
<feature type="binding site" evidence="14 19">
    <location>
        <position position="271"/>
    </location>
    <ligand>
        <name>hexacosanoyl-CoA</name>
        <dbReference type="ChEBI" id="CHEBI:64868"/>
    </ligand>
</feature>
<feature type="binding site" evidence="15 17 21 22 23">
    <location>
        <position position="274"/>
    </location>
    <ligand>
        <name>hexacosanoate</name>
        <dbReference type="ChEBI" id="CHEBI:31013"/>
    </ligand>
</feature>
<feature type="binding site" evidence="14 19">
    <location>
        <position position="274"/>
    </location>
    <ligand>
        <name>hexacosanoyl-CoA</name>
        <dbReference type="ChEBI" id="CHEBI:64868"/>
    </ligand>
</feature>
<feature type="binding site" evidence="15 17 21 22 23">
    <location>
        <position position="275"/>
    </location>
    <ligand>
        <name>hexacosanoate</name>
        <dbReference type="ChEBI" id="CHEBI:31013"/>
    </ligand>
</feature>
<feature type="binding site" evidence="14 19">
    <location>
        <position position="275"/>
    </location>
    <ligand>
        <name>hexacosanoyl-CoA</name>
        <dbReference type="ChEBI" id="CHEBI:64868"/>
    </ligand>
</feature>
<feature type="binding site" evidence="17 21 22">
    <location>
        <position position="278"/>
    </location>
    <ligand>
        <name>hexacosanoate</name>
        <dbReference type="ChEBI" id="CHEBI:31013"/>
    </ligand>
</feature>
<feature type="binding site" evidence="14 19">
    <location>
        <position position="278"/>
    </location>
    <ligand>
        <name>hexacosanoyl-CoA</name>
        <dbReference type="ChEBI" id="CHEBI:64868"/>
    </ligand>
</feature>
<feature type="binding site" evidence="15 17 21 22 23">
    <location>
        <position position="279"/>
    </location>
    <ligand>
        <name>hexacosanoate</name>
        <dbReference type="ChEBI" id="CHEBI:31013"/>
    </ligand>
</feature>
<feature type="binding site" evidence="14 19">
    <location>
        <position position="279"/>
    </location>
    <ligand>
        <name>hexacosanoyl-CoA</name>
        <dbReference type="ChEBI" id="CHEBI:64868"/>
    </ligand>
</feature>
<feature type="binding site" evidence="15 17 21 22 23">
    <location>
        <position position="282"/>
    </location>
    <ligand>
        <name>hexacosanoate</name>
        <dbReference type="ChEBI" id="CHEBI:31013"/>
    </ligand>
</feature>
<feature type="binding site" evidence="14 19">
    <location>
        <position position="282"/>
    </location>
    <ligand>
        <name>hexacosanoyl-CoA</name>
        <dbReference type="ChEBI" id="CHEBI:64868"/>
    </ligand>
</feature>
<feature type="binding site" evidence="15 17 21 23">
    <location>
        <position position="283"/>
    </location>
    <ligand>
        <name>hexacosanoate</name>
        <dbReference type="ChEBI" id="CHEBI:31013"/>
    </ligand>
</feature>
<feature type="binding site" evidence="15 17 22 23">
    <location>
        <position position="286"/>
    </location>
    <ligand>
        <name>fumonisin B1</name>
        <dbReference type="ChEBI" id="CHEBI:62554"/>
    </ligand>
</feature>
<feature type="binding site" evidence="15 17 21 23">
    <location>
        <position position="286"/>
    </location>
    <ligand>
        <name>hexacosanoate</name>
        <dbReference type="ChEBI" id="CHEBI:31013"/>
    </ligand>
</feature>
<feature type="binding site" evidence="14 19">
    <location>
        <position position="286"/>
    </location>
    <ligand>
        <name>hexacosanoyl-CoA</name>
        <dbReference type="ChEBI" id="CHEBI:64868"/>
    </ligand>
</feature>
<feature type="binding site" evidence="15 17 22 23">
    <location>
        <position position="289"/>
    </location>
    <ligand>
        <name>fumonisin B1</name>
        <dbReference type="ChEBI" id="CHEBI:62554"/>
    </ligand>
</feature>
<feature type="binding site" evidence="14 19">
    <location>
        <position position="289"/>
    </location>
    <ligand>
        <name>hexacosanoyl-CoA</name>
        <dbReference type="ChEBI" id="CHEBI:64868"/>
    </ligand>
</feature>
<feature type="binding site" evidence="15 17 22 23">
    <location>
        <position position="293"/>
    </location>
    <ligand>
        <name>fumonisin B1</name>
        <dbReference type="ChEBI" id="CHEBI:62554"/>
    </ligand>
</feature>
<feature type="binding site" evidence="14 19">
    <location>
        <position position="293"/>
    </location>
    <ligand>
        <name>hexacosanoyl-CoA</name>
        <dbReference type="ChEBI" id="CHEBI:64868"/>
    </ligand>
</feature>
<feature type="binding site" evidence="15 17 22 23">
    <location>
        <position position="296"/>
    </location>
    <ligand>
        <name>fumonisin B1</name>
        <dbReference type="ChEBI" id="CHEBI:62554"/>
    </ligand>
</feature>
<feature type="binding site" evidence="14 19">
    <location>
        <position position="296"/>
    </location>
    <ligand>
        <name>hexacosanoyl-CoA</name>
        <dbReference type="ChEBI" id="CHEBI:64868"/>
    </ligand>
</feature>
<feature type="binding site" evidence="15 17 22 23">
    <location>
        <position position="297"/>
    </location>
    <ligand>
        <name>fumonisin B1</name>
        <dbReference type="ChEBI" id="CHEBI:62554"/>
    </ligand>
</feature>
<feature type="binding site" evidence="15 17 22 23">
    <location>
        <position position="303"/>
    </location>
    <ligand>
        <name>fumonisin B1</name>
        <dbReference type="ChEBI" id="CHEBI:62554"/>
    </ligand>
</feature>
<feature type="binding site" evidence="15 17 22 23">
    <location>
        <position position="304"/>
    </location>
    <ligand>
        <name>fumonisin B1</name>
        <dbReference type="ChEBI" id="CHEBI:62554"/>
    </ligand>
</feature>
<feature type="binding site" evidence="15 17 22 23">
    <location>
        <position position="307"/>
    </location>
    <ligand>
        <name>fumonisin B1</name>
        <dbReference type="ChEBI" id="CHEBI:62554"/>
    </ligand>
</feature>
<feature type="binding site" evidence="14 19">
    <location>
        <position position="307"/>
    </location>
    <ligand>
        <name>hexacosanoyl-CoA</name>
        <dbReference type="ChEBI" id="CHEBI:64868"/>
    </ligand>
</feature>
<feature type="binding site" evidence="17 22">
    <location>
        <position position="314"/>
    </location>
    <ligand>
        <name>fumonisin B1</name>
        <dbReference type="ChEBI" id="CHEBI:62554"/>
    </ligand>
</feature>
<feature type="binding site" evidence="17 21 22">
    <location>
        <position position="318"/>
    </location>
    <ligand>
        <name>hexacosanoate</name>
        <dbReference type="ChEBI" id="CHEBI:31013"/>
    </ligand>
</feature>
<feature type="binding site" evidence="14 19">
    <location>
        <position position="318"/>
    </location>
    <ligand>
        <name>hexacosanoyl-CoA</name>
        <dbReference type="ChEBI" id="CHEBI:64868"/>
    </ligand>
</feature>
<feature type="binding site" evidence="17 22">
    <location>
        <position position="343"/>
    </location>
    <ligand>
        <name>hexacosanoate</name>
        <dbReference type="ChEBI" id="CHEBI:31013"/>
    </ligand>
</feature>
<feature type="binding site" evidence="15 17 21 22 23">
    <location>
        <position position="348"/>
    </location>
    <ligand>
        <name>hexacosanoate</name>
        <dbReference type="ChEBI" id="CHEBI:31013"/>
    </ligand>
</feature>
<feature type="binding site" evidence="14 19">
    <location>
        <position position="348"/>
    </location>
    <ligand>
        <name>hexacosanoyl-CoA</name>
        <dbReference type="ChEBI" id="CHEBI:64868"/>
    </ligand>
</feature>
<feature type="binding site" evidence="15 17 22 23">
    <location>
        <position position="352"/>
    </location>
    <ligand>
        <name>hexacosanoate</name>
        <dbReference type="ChEBI" id="CHEBI:31013"/>
    </ligand>
</feature>
<feature type="binding site" evidence="14 19">
    <location>
        <position position="352"/>
    </location>
    <ligand>
        <name>hexacosanoyl-CoA</name>
        <dbReference type="ChEBI" id="CHEBI:64868"/>
    </ligand>
</feature>
<feature type="binding site" evidence="15 17 21 22 23">
    <location>
        <position position="353"/>
    </location>
    <ligand>
        <name>hexacosanoate</name>
        <dbReference type="ChEBI" id="CHEBI:31013"/>
    </ligand>
</feature>
<feature type="binding site" evidence="14 19">
    <location>
        <position position="353"/>
    </location>
    <ligand>
        <name>hexacosanoyl-CoA</name>
        <dbReference type="ChEBI" id="CHEBI:64868"/>
    </ligand>
</feature>
<feature type="binding site" evidence="15 17 21 22 23">
    <location>
        <position position="356"/>
    </location>
    <ligand>
        <name>hexacosanoate</name>
        <dbReference type="ChEBI" id="CHEBI:31013"/>
    </ligand>
</feature>
<feature type="binding site" evidence="14 19">
    <location>
        <position position="356"/>
    </location>
    <ligand>
        <name>hexacosanoyl-CoA</name>
        <dbReference type="ChEBI" id="CHEBI:64868"/>
    </ligand>
</feature>
<feature type="binding site" evidence="15 17 21 22 23">
    <location>
        <position position="357"/>
    </location>
    <ligand>
        <name>hexacosanoate</name>
        <dbReference type="ChEBI" id="CHEBI:31013"/>
    </ligand>
</feature>
<feature type="binding site" evidence="14 19">
    <location>
        <position position="357"/>
    </location>
    <ligand>
        <name>hexacosanoyl-CoA</name>
        <dbReference type="ChEBI" id="CHEBI:64868"/>
    </ligand>
</feature>
<feature type="binding site" evidence="15 17 21 22 23">
    <location>
        <position position="360"/>
    </location>
    <ligand>
        <name>hexacosanoate</name>
        <dbReference type="ChEBI" id="CHEBI:31013"/>
    </ligand>
</feature>
<feature type="binding site" evidence="14 19">
    <location>
        <position position="360"/>
    </location>
    <ligand>
        <name>hexacosanoyl-CoA</name>
        <dbReference type="ChEBI" id="CHEBI:64868"/>
    </ligand>
</feature>
<feature type="binding site" evidence="17 21">
    <location>
        <position position="361"/>
    </location>
    <ligand>
        <name>hexacosanoate</name>
        <dbReference type="ChEBI" id="CHEBI:31013"/>
    </ligand>
</feature>
<feature type="binding site" evidence="15 17 22 23">
    <location>
        <position position="371"/>
    </location>
    <ligand>
        <name>fumonisin B1</name>
        <dbReference type="ChEBI" id="CHEBI:62554"/>
    </ligand>
</feature>
<feature type="binding site" evidence="17 22">
    <location>
        <position position="371"/>
    </location>
    <ligand>
        <name>hexacosanoate</name>
        <dbReference type="ChEBI" id="CHEBI:31013"/>
    </ligand>
</feature>
<feature type="binding site" evidence="14 19">
    <location>
        <position position="371"/>
    </location>
    <ligand>
        <name>hexacosanoyl-CoA</name>
        <dbReference type="ChEBI" id="CHEBI:64868"/>
    </ligand>
</feature>
<feature type="binding site" evidence="15 17 22 23">
    <location>
        <position position="375"/>
    </location>
    <ligand>
        <name>fumonisin B1</name>
        <dbReference type="ChEBI" id="CHEBI:62554"/>
    </ligand>
</feature>
<feature type="binding site" evidence="15 17 22 23">
    <location>
        <position position="378"/>
    </location>
    <ligand>
        <name>fumonisin B1</name>
        <dbReference type="ChEBI" id="CHEBI:62554"/>
    </ligand>
</feature>
<feature type="binding site" evidence="15 23">
    <location>
        <position position="382"/>
    </location>
    <ligand>
        <name>fumonisin B1</name>
        <dbReference type="ChEBI" id="CHEBI:62554"/>
    </ligand>
</feature>
<feature type="binding site" evidence="15 23">
    <location>
        <position position="385"/>
    </location>
    <ligand>
        <name>fumonisin B1</name>
        <dbReference type="ChEBI" id="CHEBI:62554"/>
    </ligand>
</feature>
<feature type="modified residue" description="N-acetylserine" evidence="26">
    <location>
        <position position="2"/>
    </location>
</feature>
<feature type="modified residue" description="Phosphoserine" evidence="1">
    <location>
        <position position="23"/>
    </location>
</feature>
<feature type="modified residue" description="Phosphoserine" evidence="1">
    <location>
        <position position="24"/>
    </location>
</feature>
<feature type="glycosylation site" description="N-linked (GlcNAc...) asparagine" evidence="2">
    <location>
        <position position="103"/>
    </location>
</feature>
<feature type="mutagenesis site" description="Abolishes the enzymatic activity of the ceramide synthase complex. Does not rescue the growth defect of LAC1-LAG1 double deletion mutant; when associated with A-293, A-296, A-318 and A-381." evidence="17">
    <original>R</original>
    <variation>A</variation>
    <location>
        <position position="172"/>
    </location>
</feature>
<feature type="mutagenesis site" description="Does not affect the enzymatic activity of the LAC1-LIP1 complex." evidence="14">
    <original>S</original>
    <variation>A</variation>
    <location>
        <position position="186"/>
    </location>
</feature>
<feature type="mutagenesis site" description="About 80% loss in enzymatic activity of the LAC1-LIP1 complex." evidence="14">
    <original>Q</original>
    <variation>A</variation>
    <location>
        <position position="227"/>
    </location>
</feature>
<feature type="mutagenesis site" description="About 85% loss in enzymatic activity of the LAC1-LIP1 complex." evidence="14">
    <original>W</original>
    <variation>A</variation>
    <location>
        <position position="231"/>
    </location>
</feature>
<feature type="mutagenesis site" description="Abolishes the enzymatic activity of the LAC1-LIP1 complex; alone or when associated with A-256. Does not catalyze the reaction between hexacosanoyl-CoA and fumonisin B1; when associated with A-256." evidence="14 15">
    <original>H</original>
    <variation>A</variation>
    <location>
        <position position="255"/>
    </location>
</feature>
<feature type="mutagenesis site" description="Abolishes the enzymatic activity of the LAC1-LIP1 complex; alone or when associated with A-255. Does not catalyze the reaction between hexacosanoyl-CoA and fumonisin B1; when associated with A-255." evidence="14 15">
    <original>H</original>
    <variation>A</variation>
    <location>
        <position position="256"/>
    </location>
</feature>
<feature type="mutagenesis site" description="Abolishes the enzymatic activity of the ceramide synthase complex and does not rescue the growth defect of LAC1-LAG1 double deletion mutant; when associated with F-266, F-275, F-353 and F-375." evidence="17">
    <original>S</original>
    <variation>F</variation>
    <location>
        <position position="265"/>
    </location>
</feature>
<feature type="mutagenesis site" description="Abolishes the enzymatic activity of the ceramide synthase complex and does not rescue the growth defect of LAC1-LAG1 double deletion mutant; when associated with F-265, F-275, F-353 and F-375." evidence="17">
    <original>S</original>
    <variation>F</variation>
    <location>
        <position position="266"/>
    </location>
</feature>
<feature type="mutagenesis site" description="About 75% loss in enzymatic activity of the LAC1-LIP1 complex." evidence="14">
    <original>F</original>
    <variation>A</variation>
    <location>
        <position position="269"/>
    </location>
</feature>
<feature type="mutagenesis site" description="More than 90% loss in enzymatic activity of the LAC1-LIP1 complex." evidence="14">
    <original>F</original>
    <variation>A</variation>
    <location>
        <position position="271"/>
    </location>
</feature>
<feature type="mutagenesis site" description="About 80% loss in enzymatic activity of the LAC1-LIP1 complex." evidence="14">
    <original>M</original>
    <variation>A</variation>
    <location>
        <position position="274"/>
    </location>
</feature>
<feature type="mutagenesis site" description="Abolishes the enzymatic activity of the ceramide synthase complex and does not rescue the growth defect of LAC1-LAG1 double deletion mutant; when associated with F-265, F-266, F-353 and F-375." evidence="17">
    <original>G</original>
    <variation>F</variation>
    <location>
        <position position="275"/>
    </location>
</feature>
<feature type="mutagenesis site" description="About 90% loss in enzymatic activity of the LAC1-LIP1 complex." evidence="14">
    <original>Y</original>
    <variation>A</variation>
    <location>
        <position position="279"/>
    </location>
</feature>
<feature type="mutagenesis site" description="About 60% loss in enzymatic activity of the LAC1-LIP1 complex." evidence="14">
    <original>M</original>
    <variation>A</variation>
    <location>
        <position position="282"/>
    </location>
</feature>
<feature type="mutagenesis site" description="Reduces the enzymatic activity of the LAC1-LIP1 complex." evidence="14">
    <original>D</original>
    <variation>A</variation>
    <location>
        <position position="283"/>
    </location>
</feature>
<feature type="mutagenesis site" description="Abolishes the enzymatic activity of the LAC1-LIP1 complex." evidence="14">
    <original>D</original>
    <variation>A</variation>
    <location>
        <position position="286"/>
    </location>
</feature>
<feature type="mutagenesis site" description="About 80% loss in enzymatic activity of the LAC1-LIP1 complex. Does not rescue the growth defect of LAC1-LAG1 double deletion mutant; when associated with A-172, A-296, A-318 and A-381." evidence="14 17">
    <original>K</original>
    <variation>A</variation>
    <location>
        <position position="293"/>
    </location>
</feature>
<feature type="mutagenesis site" description="About 60% loss in enzymatic activity of the LAC1-LIP1 complex. Does not rescue the growth defect of LAC1-LAG1 double deletion mutant; when associated with A-172, A-293, A-318 and A-381." evidence="14 17">
    <original>N</original>
    <variation>A</variation>
    <location>
        <position position="296"/>
    </location>
</feature>
<feature type="mutagenesis site" description="Abolishes the enzymatic activity of the LAC1-LIP1 complex. Does not rescue the growth defect of LAC1-LAG1 double deletion mutant; when associated with A-172, A-293, A-296 and A-381." evidence="14 17">
    <original>R</original>
    <variation>A</variation>
    <location>
        <position position="318"/>
    </location>
</feature>
<feature type="mutagenesis site" description="About 90% loss in enzymatic activity of the LAC1-LIP1 complex." evidence="14">
    <original>L</original>
    <variation>A</variation>
    <location>
        <position position="341"/>
    </location>
</feature>
<feature type="mutagenesis site" description="More than 90% loss in enzymatic activity of the LAC1-LIP1 complex." evidence="14">
    <original>F</original>
    <variation>A</variation>
    <location>
        <position position="343"/>
    </location>
</feature>
<feature type="mutagenesis site" description="More than 90% loss in enzymatic activity of the LAC1-LIP1 complex." evidence="14">
    <original>Y</original>
    <variation>A</variation>
    <location>
        <position position="348"/>
    </location>
</feature>
<feature type="mutagenesis site" description="About 60% loss in enzymatic activity of the LAC1-LIP1 complex." evidence="14">
    <original>I</original>
    <variation>A</variation>
    <location>
        <position position="352"/>
    </location>
</feature>
<feature type="mutagenesis site" description="Abolishes the enzymatic activity of the ceramide synthase complex and does not rescue the growth defect of LAC1-LAG1 double deletion mutant; when associated with F-265, F-266, F-275 and F-375." evidence="17">
    <original>S</original>
    <variation>F</variation>
    <location>
        <position position="353"/>
    </location>
</feature>
<feature type="mutagenesis site" description="Abolishes the enzymatic activity of the ceramide synthase complex and does not rescue the growth defect of LAC1-LAG1 double deletion mutant; when associated with F-265, F-266, F-275 and F-353." evidence="17">
    <original>I</original>
    <variation>F</variation>
    <location>
        <position position="375"/>
    </location>
</feature>
<feature type="mutagenesis site" description="Abolishes the enzymatic activity of the ceramide synthase complex. Does not rescue the growth defect of LAC1-LAG1 double deletion mutant; when associated with A-172, A-293, A-296 and A-318." evidence="17">
    <original>R</original>
    <variation>A</variation>
    <location>
        <position position="381"/>
    </location>
</feature>
<feature type="mutagenesis site" description="Reduces the in vitro activity of LAC1-LIP1 complex in the presence of ACB1, increases the levels of phytosphingosine in vivo and does not rescue the growth defect of LAC1-LAG1 double deletion mutant; when associated with A-392." evidence="17">
    <original>K</original>
    <variation>A</variation>
    <location>
        <position position="389"/>
    </location>
</feature>
<feature type="mutagenesis site" description="Reduces the in vitro activity of LAC1-LIP1 complex in the presence of ACB1, increases the levels of phytosphingosine in vivo and does not rescue the growth defect of LAC1-LAG1 double deletion mutant; when associated with A-389." evidence="17">
    <original>R</original>
    <variation>A</variation>
    <location>
        <position position="392"/>
    </location>
</feature>
<feature type="helix" evidence="27">
    <location>
        <begin position="72"/>
        <end position="81"/>
    </location>
</feature>
<feature type="helix" evidence="27">
    <location>
        <begin position="85"/>
        <end position="100"/>
    </location>
</feature>
<feature type="helix" evidence="27">
    <location>
        <begin position="110"/>
        <end position="113"/>
    </location>
</feature>
<feature type="helix" evidence="27">
    <location>
        <begin position="131"/>
        <end position="153"/>
    </location>
</feature>
<feature type="helix" evidence="27">
    <location>
        <begin position="155"/>
        <end position="159"/>
    </location>
</feature>
<feature type="strand" evidence="27">
    <location>
        <begin position="166"/>
        <end position="168"/>
    </location>
</feature>
<feature type="helix" evidence="27">
    <location>
        <begin position="169"/>
        <end position="195"/>
    </location>
</feature>
<feature type="helix" evidence="27">
    <location>
        <begin position="204"/>
        <end position="208"/>
    </location>
</feature>
<feature type="helix" evidence="27">
    <location>
        <begin position="218"/>
        <end position="239"/>
    </location>
</feature>
<feature type="helix" evidence="27">
    <location>
        <begin position="249"/>
        <end position="268"/>
    </location>
</feature>
<feature type="helix" evidence="27">
    <location>
        <begin position="272"/>
        <end position="297"/>
    </location>
</feature>
<feature type="helix" evidence="27">
    <location>
        <begin position="303"/>
        <end position="334"/>
    </location>
</feature>
<feature type="helix" evidence="27">
    <location>
        <begin position="343"/>
        <end position="345"/>
    </location>
</feature>
<feature type="helix" evidence="27">
    <location>
        <begin position="353"/>
        <end position="383"/>
    </location>
</feature>
<gene>
    <name type="primary">LAC1</name>
    <name type="synonym">DGT1</name>
    <name type="ordered locus">YKL008C</name>
    <name type="ORF">YKL156</name>
</gene>
<dbReference type="EC" id="2.3.1.297" evidence="7 11 14 15 17"/>
<dbReference type="EMBL" id="X61398">
    <property type="protein sequence ID" value="CAA43670.1"/>
    <property type="molecule type" value="Genomic_DNA"/>
</dbReference>
<dbReference type="EMBL" id="S59773">
    <property type="protein sequence ID" value="AAC60549.1"/>
    <property type="molecule type" value="Genomic_DNA"/>
</dbReference>
<dbReference type="EMBL" id="Z28008">
    <property type="protein sequence ID" value="CAA81843.1"/>
    <property type="molecule type" value="Genomic_DNA"/>
</dbReference>
<dbReference type="EMBL" id="BK006944">
    <property type="protein sequence ID" value="DAA09148.1"/>
    <property type="molecule type" value="Genomic_DNA"/>
</dbReference>
<dbReference type="PIR" id="S30134">
    <property type="entry name" value="S30134"/>
</dbReference>
<dbReference type="RefSeq" id="NP_012917.3">
    <property type="nucleotide sequence ID" value="NM_001179574.3"/>
</dbReference>
<dbReference type="PDB" id="8IZD">
    <property type="method" value="EM"/>
    <property type="resolution" value="3.09 A"/>
    <property type="chains" value="A/C=1-418"/>
</dbReference>
<dbReference type="PDB" id="8IZF">
    <property type="method" value="EM"/>
    <property type="resolution" value="3.85 A"/>
    <property type="chains" value="A/C=1-418"/>
</dbReference>
<dbReference type="PDB" id="8QTN">
    <property type="method" value="EM"/>
    <property type="resolution" value="3.00 A"/>
    <property type="chains" value="B=75-379"/>
</dbReference>
<dbReference type="PDB" id="8QTR">
    <property type="method" value="EM"/>
    <property type="resolution" value="3.20 A"/>
    <property type="chains" value="B=78-379"/>
</dbReference>
<dbReference type="PDB" id="8Y2M">
    <property type="method" value="EM"/>
    <property type="resolution" value="3.07 A"/>
    <property type="chains" value="A/C=1-418"/>
</dbReference>
<dbReference type="PDB" id="8Y2N">
    <property type="method" value="EM"/>
    <property type="resolution" value="3.19 A"/>
    <property type="chains" value="A/C=1-418"/>
</dbReference>
<dbReference type="PDB" id="8ZB1">
    <property type="method" value="EM"/>
    <property type="resolution" value="2.86 A"/>
    <property type="chains" value="A/C=1-418"/>
</dbReference>
<dbReference type="PDBsum" id="8IZD"/>
<dbReference type="PDBsum" id="8IZF"/>
<dbReference type="PDBsum" id="8QTN"/>
<dbReference type="PDBsum" id="8QTR"/>
<dbReference type="PDBsum" id="8Y2M"/>
<dbReference type="PDBsum" id="8Y2N"/>
<dbReference type="PDBsum" id="8ZB1"/>
<dbReference type="EMDB" id="EMD-18652"/>
<dbReference type="EMDB" id="EMD-18653"/>
<dbReference type="EMDB" id="EMD-35862"/>
<dbReference type="EMDB" id="EMD-35863"/>
<dbReference type="EMDB" id="EMD-38857"/>
<dbReference type="EMDB" id="EMD-38858"/>
<dbReference type="EMDB" id="EMD-39894"/>
<dbReference type="SMR" id="P28496"/>
<dbReference type="BioGRID" id="34124">
    <property type="interactions" value="112"/>
</dbReference>
<dbReference type="ComplexPortal" id="CPX-1706">
    <property type="entry name" value="acyl-CoA ceramide synthase complex"/>
</dbReference>
<dbReference type="DIP" id="DIP-4348N"/>
<dbReference type="FunCoup" id="P28496">
    <property type="interactions" value="591"/>
</dbReference>
<dbReference type="IntAct" id="P28496">
    <property type="interactions" value="67"/>
</dbReference>
<dbReference type="MINT" id="P28496"/>
<dbReference type="STRING" id="4932.YKL008C"/>
<dbReference type="SwissLipids" id="SLP:000000277"/>
<dbReference type="GlyCosmos" id="P28496">
    <property type="glycosylation" value="1 site, No reported glycans"/>
</dbReference>
<dbReference type="GlyGen" id="P28496">
    <property type="glycosylation" value="1 site"/>
</dbReference>
<dbReference type="iPTMnet" id="P28496"/>
<dbReference type="PaxDb" id="4932-YKL008C"/>
<dbReference type="PeptideAtlas" id="P28496"/>
<dbReference type="EnsemblFungi" id="YKL008C_mRNA">
    <property type="protein sequence ID" value="YKL008C"/>
    <property type="gene ID" value="YKL008C"/>
</dbReference>
<dbReference type="GeneID" id="853861"/>
<dbReference type="KEGG" id="sce:YKL008C"/>
<dbReference type="AGR" id="SGD:S000001491"/>
<dbReference type="SGD" id="S000001491">
    <property type="gene designation" value="LAC1"/>
</dbReference>
<dbReference type="VEuPathDB" id="FungiDB:YKL008C"/>
<dbReference type="eggNOG" id="KOG1607">
    <property type="taxonomic scope" value="Eukaryota"/>
</dbReference>
<dbReference type="GeneTree" id="ENSGT01030000234515"/>
<dbReference type="HOGENOM" id="CLU_028277_4_0_1"/>
<dbReference type="InParanoid" id="P28496"/>
<dbReference type="OMA" id="LCRLCML"/>
<dbReference type="OrthoDB" id="3053196at2759"/>
<dbReference type="BioCyc" id="MetaCyc:MONOMER3O-373"/>
<dbReference type="BioCyc" id="YEAST:MONOMER3O-373"/>
<dbReference type="BRENDA" id="2.3.1.297">
    <property type="organism ID" value="984"/>
</dbReference>
<dbReference type="Reactome" id="R-SCE-1660661">
    <property type="pathway name" value="Sphingolipid de novo biosynthesis"/>
</dbReference>
<dbReference type="UniPathway" id="UPA00222"/>
<dbReference type="BioGRID-ORCS" id="853861">
    <property type="hits" value="1 hit in 10 CRISPR screens"/>
</dbReference>
<dbReference type="PRO" id="PR:P28496"/>
<dbReference type="Proteomes" id="UP000002311">
    <property type="component" value="Chromosome XI"/>
</dbReference>
<dbReference type="RNAct" id="P28496">
    <property type="molecule type" value="protein"/>
</dbReference>
<dbReference type="GO" id="GO:0061576">
    <property type="term" value="C:acyl-CoA ceramide synthase complex"/>
    <property type="evidence" value="ECO:0000314"/>
    <property type="project" value="SGD"/>
</dbReference>
<dbReference type="GO" id="GO:0005783">
    <property type="term" value="C:endoplasmic reticulum"/>
    <property type="evidence" value="ECO:0000314"/>
    <property type="project" value="SGD"/>
</dbReference>
<dbReference type="GO" id="GO:0005789">
    <property type="term" value="C:endoplasmic reticulum membrane"/>
    <property type="evidence" value="ECO:0007669"/>
    <property type="project" value="UniProtKB-SubCell"/>
</dbReference>
<dbReference type="GO" id="GO:0034399">
    <property type="term" value="C:nuclear periphery"/>
    <property type="evidence" value="ECO:0007005"/>
    <property type="project" value="SGD"/>
</dbReference>
<dbReference type="GO" id="GO:0050291">
    <property type="term" value="F:sphingosine N-acyltransferase activity"/>
    <property type="evidence" value="ECO:0000314"/>
    <property type="project" value="SGD"/>
</dbReference>
<dbReference type="GO" id="GO:0046513">
    <property type="term" value="P:ceramide biosynthetic process"/>
    <property type="evidence" value="ECO:0000314"/>
    <property type="project" value="ComplexPortal"/>
</dbReference>
<dbReference type="InterPro" id="IPR016439">
    <property type="entry name" value="Lag1/Lac1-like"/>
</dbReference>
<dbReference type="InterPro" id="IPR006634">
    <property type="entry name" value="TLC-dom"/>
</dbReference>
<dbReference type="PANTHER" id="PTHR12560:SF11">
    <property type="entry name" value="CERAMIDE SYNTHASE LAC1-RELATED"/>
    <property type="match status" value="1"/>
</dbReference>
<dbReference type="PANTHER" id="PTHR12560">
    <property type="entry name" value="LONGEVITY ASSURANCE FACTOR 1 LAG1"/>
    <property type="match status" value="1"/>
</dbReference>
<dbReference type="Pfam" id="PF03798">
    <property type="entry name" value="TRAM_LAG1_CLN8"/>
    <property type="match status" value="1"/>
</dbReference>
<dbReference type="PIRSF" id="PIRSF005225">
    <property type="entry name" value="LAG1_LAC1"/>
    <property type="match status" value="1"/>
</dbReference>
<dbReference type="SMART" id="SM00724">
    <property type="entry name" value="TLC"/>
    <property type="match status" value="1"/>
</dbReference>
<dbReference type="PROSITE" id="PS50922">
    <property type="entry name" value="TLC"/>
    <property type="match status" value="1"/>
</dbReference>
<name>LAC1_YEAST</name>
<keyword id="KW-0002">3D-structure</keyword>
<keyword id="KW-0007">Acetylation</keyword>
<keyword id="KW-0256">Endoplasmic reticulum</keyword>
<keyword id="KW-0325">Glycoprotein</keyword>
<keyword id="KW-0444">Lipid biosynthesis</keyword>
<keyword id="KW-0443">Lipid metabolism</keyword>
<keyword id="KW-0472">Membrane</keyword>
<keyword id="KW-0597">Phosphoprotein</keyword>
<keyword id="KW-1185">Reference proteome</keyword>
<keyword id="KW-0808">Transferase</keyword>
<keyword id="KW-0812">Transmembrane</keyword>
<keyword id="KW-1133">Transmembrane helix</keyword>
<evidence type="ECO:0000250" key="1">
    <source>
        <dbReference type="UniProtKB" id="P38703"/>
    </source>
</evidence>
<evidence type="ECO:0000255" key="2"/>
<evidence type="ECO:0000255" key="3">
    <source>
        <dbReference type="PROSITE-ProRule" id="PRU00205"/>
    </source>
</evidence>
<evidence type="ECO:0000256" key="4">
    <source>
        <dbReference type="SAM" id="MobiDB-lite"/>
    </source>
</evidence>
<evidence type="ECO:0000269" key="5">
    <source>
    </source>
</evidence>
<evidence type="ECO:0000269" key="6">
    <source>
    </source>
</evidence>
<evidence type="ECO:0000269" key="7">
    <source>
    </source>
</evidence>
<evidence type="ECO:0000269" key="8">
    <source>
    </source>
</evidence>
<evidence type="ECO:0000269" key="9">
    <source>
    </source>
</evidence>
<evidence type="ECO:0000269" key="10">
    <source>
    </source>
</evidence>
<evidence type="ECO:0000269" key="11">
    <source>
    </source>
</evidence>
<evidence type="ECO:0000269" key="12">
    <source>
    </source>
</evidence>
<evidence type="ECO:0000269" key="13">
    <source>
    </source>
</evidence>
<evidence type="ECO:0000269" key="14">
    <source>
    </source>
</evidence>
<evidence type="ECO:0000269" key="15">
    <source>
    </source>
</evidence>
<evidence type="ECO:0000269" key="16">
    <source>
    </source>
</evidence>
<evidence type="ECO:0000269" key="17">
    <source>
    </source>
</evidence>
<evidence type="ECO:0000305" key="18"/>
<evidence type="ECO:0007744" key="19">
    <source>
        <dbReference type="PDB" id="8IZD"/>
    </source>
</evidence>
<evidence type="ECO:0007744" key="20">
    <source>
        <dbReference type="PDB" id="8IZF"/>
    </source>
</evidence>
<evidence type="ECO:0007744" key="21">
    <source>
        <dbReference type="PDB" id="8QTN"/>
    </source>
</evidence>
<evidence type="ECO:0007744" key="22">
    <source>
        <dbReference type="PDB" id="8QTR"/>
    </source>
</evidence>
<evidence type="ECO:0007744" key="23">
    <source>
        <dbReference type="PDB" id="8Y2M"/>
    </source>
</evidence>
<evidence type="ECO:0007744" key="24">
    <source>
        <dbReference type="PDB" id="8Y2N"/>
    </source>
</evidence>
<evidence type="ECO:0007744" key="25">
    <source>
        <dbReference type="PDB" id="8ZB1"/>
    </source>
</evidence>
<evidence type="ECO:0007744" key="26">
    <source>
    </source>
</evidence>
<evidence type="ECO:0007829" key="27">
    <source>
        <dbReference type="PDB" id="8IZD"/>
    </source>
</evidence>
<reference key="1">
    <citation type="journal article" date="1993" name="Yeast">
        <title>Sequence of a 7.8 kb segment on the left arm of yeast chromosome XI reveals four open reading frames, including the CAP1 gene, an intron-containing gene and a gene encoding a homolog to the mammalian UOG-1 gene.</title>
        <authorList>
            <person name="Boyer J."/>
            <person name="Pascolo S."/>
            <person name="Richard G.-F."/>
            <person name="Dujon B."/>
        </authorList>
    </citation>
    <scope>NUCLEOTIDE SEQUENCE [GENOMIC DNA]</scope>
</reference>
<reference key="2">
    <citation type="journal article" date="1994" name="Nature">
        <title>Complete DNA sequence of yeast chromosome XI.</title>
        <authorList>
            <person name="Dujon B."/>
            <person name="Alexandraki D."/>
            <person name="Andre B."/>
            <person name="Ansorge W."/>
            <person name="Baladron V."/>
            <person name="Ballesta J.P.G."/>
            <person name="Banrevi A."/>
            <person name="Bolle P.-A."/>
            <person name="Bolotin-Fukuhara M."/>
            <person name="Bossier P."/>
            <person name="Bou G."/>
            <person name="Boyer J."/>
            <person name="Buitrago M.J."/>
            <person name="Cheret G."/>
            <person name="Colleaux L."/>
            <person name="Daignan-Fornier B."/>
            <person name="del Rey F."/>
            <person name="Dion C."/>
            <person name="Domdey H."/>
            <person name="Duesterhoeft A."/>
            <person name="Duesterhus S."/>
            <person name="Entian K.-D."/>
            <person name="Erfle H."/>
            <person name="Esteban P.F."/>
            <person name="Feldmann H."/>
            <person name="Fernandes L."/>
            <person name="Fobo G.M."/>
            <person name="Fritz C."/>
            <person name="Fukuhara H."/>
            <person name="Gabel C."/>
            <person name="Gaillon L."/>
            <person name="Garcia-Cantalejo J.M."/>
            <person name="Garcia-Ramirez J.J."/>
            <person name="Gent M.E."/>
            <person name="Ghazvini M."/>
            <person name="Goffeau A."/>
            <person name="Gonzalez A."/>
            <person name="Grothues D."/>
            <person name="Guerreiro P."/>
            <person name="Hegemann J.H."/>
            <person name="Hewitt N."/>
            <person name="Hilger F."/>
            <person name="Hollenberg C.P."/>
            <person name="Horaitis O."/>
            <person name="Indge K.J."/>
            <person name="Jacquier A."/>
            <person name="James C.M."/>
            <person name="Jauniaux J.-C."/>
            <person name="Jimenez A."/>
            <person name="Keuchel H."/>
            <person name="Kirchrath L."/>
            <person name="Kleine K."/>
            <person name="Koetter P."/>
            <person name="Legrain P."/>
            <person name="Liebl S."/>
            <person name="Louis E.J."/>
            <person name="Maia e Silva A."/>
            <person name="Marck C."/>
            <person name="Monnier A.-L."/>
            <person name="Moestl D."/>
            <person name="Mueller S."/>
            <person name="Obermaier B."/>
            <person name="Oliver S.G."/>
            <person name="Pallier C."/>
            <person name="Pascolo S."/>
            <person name="Pfeiffer F."/>
            <person name="Philippsen P."/>
            <person name="Planta R.J."/>
            <person name="Pohl F.M."/>
            <person name="Pohl T.M."/>
            <person name="Poehlmann R."/>
            <person name="Portetelle D."/>
            <person name="Purnelle B."/>
            <person name="Puzos V."/>
            <person name="Ramezani Rad M."/>
            <person name="Rasmussen S.W."/>
            <person name="Remacha M.A."/>
            <person name="Revuelta J.L."/>
            <person name="Richard G.-F."/>
            <person name="Rieger M."/>
            <person name="Rodrigues-Pousada C."/>
            <person name="Rose M."/>
            <person name="Rupp T."/>
            <person name="Santos M.A."/>
            <person name="Schwager C."/>
            <person name="Sensen C."/>
            <person name="Skala J."/>
            <person name="Soares H."/>
            <person name="Sor F."/>
            <person name="Stegemann J."/>
            <person name="Tettelin H."/>
            <person name="Thierry A."/>
            <person name="Tzermia M."/>
            <person name="Urrestarazu L.A."/>
            <person name="van Dyck L."/>
            <person name="van Vliet-Reedijk J.C."/>
            <person name="Valens M."/>
            <person name="Vandenbol M."/>
            <person name="Vilela C."/>
            <person name="Vissers S."/>
            <person name="von Wettstein D."/>
            <person name="Voss H."/>
            <person name="Wiemann S."/>
            <person name="Xu G."/>
            <person name="Zimmermann J."/>
            <person name="Haasemann M."/>
            <person name="Becker I."/>
            <person name="Mewes H.-W."/>
        </authorList>
    </citation>
    <scope>NUCLEOTIDE SEQUENCE [LARGE SCALE GENOMIC DNA]</scope>
    <source>
        <strain>ATCC 204508 / S288c</strain>
    </source>
</reference>
<reference key="3">
    <citation type="journal article" date="2014" name="G3 (Bethesda)">
        <title>The reference genome sequence of Saccharomyces cerevisiae: Then and now.</title>
        <authorList>
            <person name="Engel S.R."/>
            <person name="Dietrich F.S."/>
            <person name="Fisk D.G."/>
            <person name="Binkley G."/>
            <person name="Balakrishnan R."/>
            <person name="Costanzo M.C."/>
            <person name="Dwight S.S."/>
            <person name="Hitz B.C."/>
            <person name="Karra K."/>
            <person name="Nash R.S."/>
            <person name="Weng S."/>
            <person name="Wong E.D."/>
            <person name="Lloyd P."/>
            <person name="Skrzypek M.S."/>
            <person name="Miyasato S.R."/>
            <person name="Simison M."/>
            <person name="Cherry J.M."/>
        </authorList>
    </citation>
    <scope>GENOME REANNOTATION</scope>
    <source>
        <strain>ATCC 204508 / S288c</strain>
    </source>
</reference>
<reference key="4">
    <citation type="journal article" date="1992" name="J. Cell Biol.">
        <title>Effects of null mutations and overexpression of capping protein on morphogenesis, actin distribution and polarized secretion in yeast.</title>
        <authorList>
            <person name="Amatruda J.F."/>
            <person name="Gattermeir D.J."/>
            <person name="Karpova T.S."/>
            <person name="Cooper J.A."/>
        </authorList>
    </citation>
    <scope>NUCLEOTIDE SEQUENCE [GENOMIC DNA] OF 1-149</scope>
</reference>
<reference key="5">
    <citation type="journal article" date="1999" name="Mol. Biol. Cell">
        <title>Two endoplasmic reticulum (ER) membrane proteins that facilitate ER-to-Golgi transport of glycosylphosphatidylinositol-anchored proteins.</title>
        <authorList>
            <person name="Barz W.P."/>
            <person name="Walter P."/>
        </authorList>
    </citation>
    <scope>FUNCTION</scope>
    <scope>SUBCELLULAR LOCATION</scope>
</reference>
<reference key="6">
    <citation type="journal article" date="2001" name="EMBO J.">
        <title>C26-CoA-dependent ceramide synthesis of Saccharomyces cerevisiae is operated by Lag1p and Lac1p.</title>
        <authorList>
            <person name="Guillas I."/>
            <person name="Kirchman P.A."/>
            <person name="Chuard R."/>
            <person name="Pfefferli M."/>
            <person name="Jiang J.C."/>
            <person name="Jazwinski S.M."/>
            <person name="Conzelmann A."/>
        </authorList>
    </citation>
    <scope>FUNCTION</scope>
</reference>
<reference key="7">
    <citation type="journal article" date="2001" name="Mol. Biol. Cell">
        <title>Lag1p and Lac1p are essential for the acyl-CoA-dependent ceramide synthase reaction in Saccharomyces cerevisae.</title>
        <authorList>
            <person name="Schorling S."/>
            <person name="Vallee B."/>
            <person name="Barz W.P."/>
            <person name="Riezman H."/>
            <person name="Oesterhelt D."/>
        </authorList>
    </citation>
    <scope>FUNCTION</scope>
    <scope>CATALYTIC ACTIVITY</scope>
    <scope>PATHWAY</scope>
</reference>
<reference key="8">
    <citation type="journal article" date="2002" name="Trends Biochem. Sci.">
        <title>TRAM, LAG1 and CLN8: members of a novel family of lipid-sensing domains?</title>
        <authorList>
            <person name="Winter E."/>
            <person name="Ponting C.P."/>
        </authorList>
    </citation>
    <scope>DOMAIN</scope>
    <scope>TOPOLOGY</scope>
</reference>
<reference key="9">
    <citation type="journal article" date="2003" name="Nature">
        <title>Global analysis of protein localization in budding yeast.</title>
        <authorList>
            <person name="Huh W.-K."/>
            <person name="Falvo J.V."/>
            <person name="Gerke L.C."/>
            <person name="Carroll A.S."/>
            <person name="Howson R.W."/>
            <person name="Weissman J.S."/>
            <person name="O'Shea E.K."/>
        </authorList>
    </citation>
    <scope>SUBCELLULAR LOCATION [LARGE SCALE ANALYSIS]</scope>
</reference>
<reference key="10">
    <citation type="journal article" date="2003" name="Nature">
        <title>Global analysis of protein expression in yeast.</title>
        <authorList>
            <person name="Ghaemmaghami S."/>
            <person name="Huh W.-K."/>
            <person name="Bower K."/>
            <person name="Howson R.W."/>
            <person name="Belle A."/>
            <person name="Dephoure N."/>
            <person name="O'Shea E.K."/>
            <person name="Weissman J.S."/>
        </authorList>
    </citation>
    <scope>LEVEL OF PROTEIN EXPRESSION [LARGE SCALE ANALYSIS]</scope>
</reference>
<reference key="11">
    <citation type="journal article" date="2004" name="Eukaryot. Cell">
        <title>Differential regulation of ceramide synthase components LAC1 and LAG1 in Saccharomyces cerevisiae.</title>
        <authorList>
            <person name="Kolaczkowski M."/>
            <person name="Kolaczkowska A."/>
            <person name="Gaigg B."/>
            <person name="Schneiter R."/>
            <person name="Moye-Rowley W.S."/>
        </authorList>
    </citation>
    <scope>INDUCTION</scope>
</reference>
<reference key="12">
    <citation type="journal article" date="2005" name="EMBO J.">
        <title>Lip1p: a novel subunit of acyl-CoA ceramide synthase.</title>
        <authorList>
            <person name="Vallee B."/>
            <person name="Riezman H."/>
        </authorList>
    </citation>
    <scope>FUNCTION</scope>
    <scope>CATALYTIC ACTIVITY</scope>
    <scope>PATHWAY</scope>
    <scope>IDENTIFICATION BY MASS SPECTROMETRY</scope>
    <scope>INTERACTION WITH LAG1 AND LIP1</scope>
</reference>
<reference key="13">
    <citation type="journal article" date="2006" name="Biochem. J.">
        <title>Transmembrane topology of ceramide synthase in yeast.</title>
        <authorList>
            <person name="Kageyama-Yahara N."/>
            <person name="Riezman H."/>
        </authorList>
    </citation>
    <scope>TOPOLOGY</scope>
</reference>
<reference key="14">
    <citation type="journal article" date="2006" name="Proc. Natl. Acad. Sci. U.S.A.">
        <title>A global topology map of the Saccharomyces cerevisiae membrane proteome.</title>
        <authorList>
            <person name="Kim H."/>
            <person name="Melen K."/>
            <person name="Oesterberg M."/>
            <person name="von Heijne G."/>
        </authorList>
    </citation>
    <scope>TOPOLOGY [LARGE SCALE ANALYSIS]</scope>
    <source>
        <strain>ATCC 208353 / W303-1A</strain>
    </source>
</reference>
<reference key="15">
    <citation type="journal article" date="2012" name="Proc. Natl. Acad. Sci. U.S.A.">
        <title>N-terminal acetylome analyses and functional insights of the N-terminal acetyltransferase NatB.</title>
        <authorList>
            <person name="Van Damme P."/>
            <person name="Lasa M."/>
            <person name="Polevoda B."/>
            <person name="Gazquez C."/>
            <person name="Elosegui-Artola A."/>
            <person name="Kim D.S."/>
            <person name="De Juan-Pardo E."/>
            <person name="Demeyer K."/>
            <person name="Hole K."/>
            <person name="Larrea E."/>
            <person name="Timmerman E."/>
            <person name="Prieto J."/>
            <person name="Arnesen T."/>
            <person name="Sherman F."/>
            <person name="Gevaert K."/>
            <person name="Aldabe R."/>
        </authorList>
    </citation>
    <scope>ACETYLATION [LARGE SCALE ANALYSIS] AT SER-2</scope>
    <scope>CLEAVAGE OF INITIATOR METHIONINE [LARGE SCALE ANALYSIS]</scope>
    <scope>IDENTIFICATION BY MASS SPECTROMETRY [LARGE SCALE ANALYSIS]</scope>
</reference>
<reference evidence="18" key="16">
    <citation type="journal article" date="2016" name="Cell Cycle">
        <title>Ceramide signals for initiation of yeast mating-specific cell cycle arrest.</title>
        <authorList>
            <person name="Villasmil M.L."/>
            <person name="Francisco J."/>
            <person name="Gallo-Ebert C."/>
            <person name="Donigan M."/>
            <person name="Liu H.Y."/>
            <person name="Brower M."/>
            <person name="Nickels J.T. Jr."/>
        </authorList>
    </citation>
    <scope>FUNCTION</scope>
    <scope>DISRUPTION PHENOTYPE</scope>
</reference>
<reference evidence="18" key="17">
    <citation type="journal article" date="2019" name="J. Cell Sci.">
        <title>Yeast ceramide synthases, Lag1 and Lac1, have distinct substrate specificity.</title>
        <authorList>
            <person name="Megyeri M."/>
            <person name="Prasad R."/>
            <person name="Volpert G."/>
            <person name="Sliwa-Gonzalez A."/>
            <person name="Haribowo A.G."/>
            <person name="Aguilera-Romero A."/>
            <person name="Riezman H."/>
            <person name="Barral Y."/>
            <person name="Futerman A.H."/>
            <person name="Schuldiner M."/>
        </authorList>
    </citation>
    <scope>FUNCTION</scope>
    <scope>DISRUPTION PHENOTYPE</scope>
</reference>
<reference evidence="18" key="18">
    <citation type="journal article" date="2024" name="J. Lipid Res.">
        <title>Orm proteins control ceramide synthesis and endocytosis via LCB-mediated Ypk1 regulation.</title>
        <authorList>
            <person name="Ren J."/>
            <person name="Rieger R."/>
            <person name="Pereira de Sa N."/>
            <person name="Kelapire D."/>
            <person name="Del Poeta M."/>
            <person name="Hannun Y.A."/>
        </authorList>
    </citation>
    <scope>PHOSPHORYLATION</scope>
</reference>
<reference evidence="19 20" key="19">
    <citation type="journal article" date="2023" name="EMBO J.">
        <title>Structure and mechanism of a eukaryotic ceramide synthase complex.</title>
        <authorList>
            <person name="Xie T."/>
            <person name="Fang Q."/>
            <person name="Zhang Z."/>
            <person name="Wang Y."/>
            <person name="Dong F."/>
            <person name="Gong X."/>
        </authorList>
    </citation>
    <scope>STRUCTURE BY ELECTRON MICROSCOPY (3.09 ANGSTROMS)IN COMPLEX WITH LIP1; HEXACOSANOYL-COA AND 1-PALMITOYL-2-STEAROYL-SN-GLYCERO-3-PHOSPHOCHOLINE</scope>
    <scope>FUNCTION</scope>
    <scope>CATALYTIC ACTIVITY</scope>
    <scope>SUBUNIT</scope>
    <scope>MUTAGENESIS OF SER-186; GLN-227; TRP-231; HIS-255; HIS-256; PHE-269; PHE-271; MET-274; TYR-279; MET-282; ASP-283; ASP-286; LYS-293; ASN-296; ARG-318; LEU-341; PHE-343; TYR-348 AND ILE-352</scope>
</reference>
<reference evidence="21 22" key="20">
    <citation type="journal article" date="2024" name="Nat. Struct. Mol. Biol.">
        <title>Structure of the yeast ceramide synthase.</title>
        <authorList>
            <person name="Schafer J.H."/>
            <person name="Clausmeyer L."/>
            <person name="Korner C."/>
            <person name="Esch B.M."/>
            <person name="Wolf V.N."/>
            <person name="Sapia J."/>
            <person name="Ahmed Y."/>
            <person name="Walter S."/>
            <person name="Vanni S."/>
            <person name="Januliene D."/>
            <person name="Moeller A."/>
            <person name="Frohlich F."/>
        </authorList>
    </citation>
    <scope>STRUCTURE BY ELECTRON MICROSCOPY (3.00 ANGSTROMS) OF 75-379 IN COMPLEX WITH LAG1; LIP1; HEXACOSANOIC ACID; 1,2-DISTEAROYL-SN-GLYCERO-3-PHOSPHOETHANOLAMINE AND FUMONISIN B1</scope>
    <scope>FUNCTION</scope>
    <scope>CATALYTIC ACTIVITY</scope>
    <scope>SUBUNIT</scope>
    <scope>DISRUPTION PHENOTYPE</scope>
    <scope>MUTAGENESIS OF ARG-172; SER-265; SER-266; GLY-275; LEU-289; LYS-293; ASN-296; ARG-318; SER-353; ILE-375; ARG-381; LYS-389 AND ARG-392</scope>
</reference>
<reference evidence="23 24 25" key="21">
    <citation type="journal article" date="2024" name="Structure">
        <title>Mechanism of ceramide synthase inhibition by fumonisin B1.</title>
        <authorList>
            <person name="Zhang Z."/>
            <person name="Fang Q."/>
            <person name="Xie T."/>
            <person name="Gong X."/>
        </authorList>
    </citation>
    <scope>STRUCTURE BY ELECTRON MICROSCOPY (2.86 ANGSTROMS) OF LAC1 AND LIP1 IN APO FORM AND IN COMPLEX WITH HEXACOSANOIC ACID; FUMONISIN B1 AND N-ACYL FUMONISIN B1</scope>
    <scope>SUBUNIT</scope>
    <scope>MUTAGENESIS OF HIS-255 AND HIS-256</scope>
</reference>
<organism>
    <name type="scientific">Saccharomyces cerevisiae (strain ATCC 204508 / S288c)</name>
    <name type="common">Baker's yeast</name>
    <dbReference type="NCBI Taxonomy" id="559292"/>
    <lineage>
        <taxon>Eukaryota</taxon>
        <taxon>Fungi</taxon>
        <taxon>Dikarya</taxon>
        <taxon>Ascomycota</taxon>
        <taxon>Saccharomycotina</taxon>
        <taxon>Saccharomycetes</taxon>
        <taxon>Saccharomycetales</taxon>
        <taxon>Saccharomycetaceae</taxon>
        <taxon>Saccharomyces</taxon>
    </lineage>
</organism>
<comment type="function">
    <text evidence="5 6 7 11 12 13 14 17">Component of the ceramide synthase complex that catalyzes the transfer of the acyl chain from acyl-CoA to a sphingoid base, with high selectivity toward hexacosanoyl-CoA (C26:0-CoA) (PubMed:11694577, PubMed:15692566, PubMed:37953642, PubMed:39528796). N-acylates sphinganine and phytosphingosine bases to form dihydroceramides and phytoceramides, respectively (PubMed:11694577, PubMed:15692566). Redundant with LAG1 (PubMed:39528796). Facilitates ER-to-Golgi transport of GPI-anchored proteins. Has a lower affinity for phytosphingosine (PHS) than dihydrosphingosine (DHS); PHS is required for the synthesis of phytoceramides and the formation of nuclear envelopes (PubMed:31164445). Along with LAG1, plays a role in pheromone-induced MAP kinase-activation of mating and formation of diploid cells (PubMed:26726837). May also play a role, together with LAG1, in the polarized membrane distribution of phosphatidylinositol 4,5 biphosphate required for STE5 localization to the plasma membrane (PubMed:26726837).</text>
</comment>
<comment type="catalytic activity">
    <reaction evidence="7 11 14 15 17">
        <text>a very long-chain fatty acyl-CoA + a sphingoid base = an N-(very-long-chain fatty acyl)-sphingoid base + CoA + H(+)</text>
        <dbReference type="Rhea" id="RHEA:61480"/>
        <dbReference type="ChEBI" id="CHEBI:15378"/>
        <dbReference type="ChEBI" id="CHEBI:57287"/>
        <dbReference type="ChEBI" id="CHEBI:84410"/>
        <dbReference type="ChEBI" id="CHEBI:138261"/>
        <dbReference type="ChEBI" id="CHEBI:144712"/>
        <dbReference type="EC" id="2.3.1.297"/>
    </reaction>
    <physiologicalReaction direction="left-to-right" evidence="7 11 14 15 17">
        <dbReference type="Rhea" id="RHEA:61481"/>
    </physiologicalReaction>
</comment>
<comment type="catalytic activity">
    <reaction evidence="11">
        <text>hexacosanoyl-CoA + sphinganine = N-hexacosanoylsphinganine + CoA + H(+)</text>
        <dbReference type="Rhea" id="RHEA:33351"/>
        <dbReference type="ChEBI" id="CHEBI:15378"/>
        <dbReference type="ChEBI" id="CHEBI:52962"/>
        <dbReference type="ChEBI" id="CHEBI:57287"/>
        <dbReference type="ChEBI" id="CHEBI:57817"/>
        <dbReference type="ChEBI" id="CHEBI:64868"/>
    </reaction>
    <physiologicalReaction direction="left-to-right" evidence="11">
        <dbReference type="Rhea" id="RHEA:33352"/>
    </physiologicalReaction>
</comment>
<comment type="catalytic activity">
    <reaction evidence="11">
        <text>eicosanoyl-CoA + sphinganine = N-eicosanoylsphinganine + CoA + H(+)</text>
        <dbReference type="Rhea" id="RHEA:36555"/>
        <dbReference type="ChEBI" id="CHEBI:15378"/>
        <dbReference type="ChEBI" id="CHEBI:57287"/>
        <dbReference type="ChEBI" id="CHEBI:57380"/>
        <dbReference type="ChEBI" id="CHEBI:57817"/>
        <dbReference type="ChEBI" id="CHEBI:67027"/>
    </reaction>
    <physiologicalReaction direction="left-to-right" evidence="11">
        <dbReference type="Rhea" id="RHEA:36556"/>
    </physiologicalReaction>
</comment>
<comment type="catalytic activity">
    <reaction evidence="7">
        <text>a fatty acyl-CoA + sphinganine = an N-acylsphinganine + CoA + H(+)</text>
        <dbReference type="Rhea" id="RHEA:34735"/>
        <dbReference type="ChEBI" id="CHEBI:15378"/>
        <dbReference type="ChEBI" id="CHEBI:31488"/>
        <dbReference type="ChEBI" id="CHEBI:57287"/>
        <dbReference type="ChEBI" id="CHEBI:57817"/>
        <dbReference type="ChEBI" id="CHEBI:77636"/>
    </reaction>
    <physiologicalReaction direction="left-to-right" evidence="7">
        <dbReference type="Rhea" id="RHEA:34736"/>
    </physiologicalReaction>
</comment>
<comment type="catalytic activity">
    <reaction evidence="7">
        <text>(4R)-hydroxysphinganine + a fatty acyl-CoA = an N-acyl-(4R)-4-hydroxysphinganine + CoA + H(+)</text>
        <dbReference type="Rhea" id="RHEA:35651"/>
        <dbReference type="ChEBI" id="CHEBI:15378"/>
        <dbReference type="ChEBI" id="CHEBI:31998"/>
        <dbReference type="ChEBI" id="CHEBI:57287"/>
        <dbReference type="ChEBI" id="CHEBI:64124"/>
        <dbReference type="ChEBI" id="CHEBI:77636"/>
    </reaction>
    <physiologicalReaction direction="left-to-right" evidence="7">
        <dbReference type="Rhea" id="RHEA:35652"/>
    </physiologicalReaction>
</comment>
<comment type="activity regulation">
    <text evidence="15 17">As part of the ceramide synthase complex, inhibited by the sphinganine analog mycotoxin, fumonisin B1 (FB1) (PubMed:38964337, PubMed:39528796). Activated by ACB1, as part of the ceramide synthase complex (PubMed:39528796).</text>
</comment>
<comment type="pathway">
    <text evidence="7 11">Lipid metabolism; sphingolipid metabolism.</text>
</comment>
<comment type="subunit">
    <text evidence="14 15 17">Component of the ceramide synthase complex composed of at least LAC1, LAG1 and LIP1 (PubMed:37953642, PubMed:39528796). Forms a heterotetrameric complex, where one unit of the LIP1 homodimer interacts with LAC1 and the other with either LAC1 or LAG1 (PubMed:37953642, PubMed:38964337, PubMed:39528796).</text>
</comment>
<comment type="interaction">
    <interactant intactId="EBI-26585">
        <id>P28496</id>
    </interactant>
    <interactant intactId="EBI-10035">
        <id>P38703</id>
        <label>LAG1</label>
    </interactant>
    <organismsDiffer>false</organismsDiffer>
    <experiments>7</experiments>
</comment>
<comment type="interaction">
    <interactant intactId="EBI-26585">
        <id>P28496</id>
    </interactant>
    <interactant intactId="EBI-27640">
        <id>Q03579</id>
        <label>LIP1</label>
    </interactant>
    <organismsDiffer>false</organismsDiffer>
    <experiments>6</experiments>
</comment>
<comment type="subcellular location">
    <subcellularLocation>
        <location evidence="5 8">Endoplasmic reticulum membrane</location>
        <topology evidence="5 8">Multi-pass membrane protein</topology>
    </subcellularLocation>
    <text evidence="14">The specific interaction of LAC1 and LIP1 at the lumen of the ER may be important for the enzymatic activity of the complex.</text>
</comment>
<comment type="induction">
    <text evidence="10">Expression is controlled by PDR1 and PDR3 which bind its promoter PDRE element, and by ROX1 and CBF1.</text>
</comment>
<comment type="PTM">
    <text evidence="1 16">Phosphorylated; phosphorylation is induced upon disruption of sphingolipid synthesis (By similarity). Phosphorylation is inhibited by exogenous addition of phytosphingosine (PubMed:39490931).</text>
</comment>
<comment type="disruption phenotype">
    <text evidence="12 13 17">Does not affect the level of total sphingolipids (PubMed:31164445). Exhibits weak diffusion barriers only in cortical ER and not in the nuclear envelope (PubMed:31164445). Double knockout of LAC1 and LAG1 abolishes growth and leads to mating defects including defects in diploid cell formation, pheromone-induced shmoo formation, induction of cell cycle arrest and activation of mating-specific MAP kinase (PubMed:26726837, PubMed:39528796). Also defective in the localization of STE5 to the plasma membrane (PubMed:26726837). Double knockout of LAC1 and SUR2 reduces the ability to synthesize dihydrosphingosines and other complex sphingolipids and increases sensitivity to thermal stress (PubMed:31164445).</text>
</comment>
<comment type="miscellaneous">
    <text evidence="9">Present with 2840 molecules/cell in log phase SD medium.</text>
</comment>
<comment type="similarity">
    <text evidence="18">Belongs to the sphingosine N-acyltransferase family.</text>
</comment>
<sequence>MSTIKPSPSNNNLKVRSRPRRKSSIGKIDLGDTVPSLGTMFETKESKTAAKRRMQRLSEATKNDSDLVKKIWFSFREISYRHAWIAPLMILIAVYSAYFTSGNTTKTNVLHRFVAVSYQIGDTNAYGKGINDLCFVFYYMIFFTFLREFLMDVVIRPFAIRLHVTSKHRIKRIMEQMYAIFYTGVSGPFGIYCMYHSDLWFFNTKAMYRTYPDFTNPFLFKVFYLGQAAFWAQQACILVLQLEKPRKDHNELTFHHIVTLLLIWSSYVFHFTKMGLPIYITMDVSDFLLSFSKTLNYLDSGLAFFSFAIFVVAWIYLRHYINLKILWSVLTQFRTEGNYVLNFATQQYKCWISLPIVFVLIGALQLVNLYWLFLIFRVLYRILWRGILKDDRSDSESDEESDESSTTPTDSTPTKKDI</sequence>
<proteinExistence type="evidence at protein level"/>
<accession>P28496</accession>
<accession>D6VXS8</accession>